<protein>
    <recommendedName>
        <fullName>Isocitrate dehydrogenase [NADP]</fullName>
        <shortName>IDH</shortName>
        <ecNumber evidence="1">1.1.1.42</ecNumber>
    </recommendedName>
    <alternativeName>
        <fullName>IDP</fullName>
    </alternativeName>
    <alternativeName>
        <fullName>NADP(+)-specific ICDH</fullName>
    </alternativeName>
    <alternativeName>
        <fullName>Oxalosuccinate decarboxylase</fullName>
    </alternativeName>
</protein>
<comment type="function">
    <text evidence="1">Catalyzes the oxidative decarboxylation of isocitrate to 2-oxoglutarate and carbon dioxide with the concomitant reduction of NADP(+).</text>
</comment>
<comment type="catalytic activity">
    <reaction evidence="1">
        <text>D-threo-isocitrate + NADP(+) = 2-oxoglutarate + CO2 + NADPH</text>
        <dbReference type="Rhea" id="RHEA:19629"/>
        <dbReference type="ChEBI" id="CHEBI:15562"/>
        <dbReference type="ChEBI" id="CHEBI:16526"/>
        <dbReference type="ChEBI" id="CHEBI:16810"/>
        <dbReference type="ChEBI" id="CHEBI:57783"/>
        <dbReference type="ChEBI" id="CHEBI:58349"/>
        <dbReference type="EC" id="1.1.1.42"/>
    </reaction>
</comment>
<comment type="cofactor">
    <cofactor evidence="1">
        <name>Mg(2+)</name>
        <dbReference type="ChEBI" id="CHEBI:18420"/>
    </cofactor>
    <cofactor evidence="1">
        <name>Mn(2+)</name>
        <dbReference type="ChEBI" id="CHEBI:29035"/>
    </cofactor>
    <text evidence="1">Binds 1 Mg(2+) or Mn(2+) ion per subunit.</text>
</comment>
<comment type="subunit">
    <text evidence="1">Homodimer.</text>
</comment>
<comment type="similarity">
    <text evidence="2">Belongs to the isocitrate and isopropylmalate dehydrogenases family.</text>
</comment>
<keyword id="KW-0329">Glyoxylate bypass</keyword>
<keyword id="KW-0460">Magnesium</keyword>
<keyword id="KW-0464">Manganese</keyword>
<keyword id="KW-0479">Metal-binding</keyword>
<keyword id="KW-0521">NADP</keyword>
<keyword id="KW-0560">Oxidoreductase</keyword>
<keyword id="KW-1185">Reference proteome</keyword>
<keyword id="KW-0816">Tricarboxylic acid cycle</keyword>
<dbReference type="EC" id="1.1.1.42" evidence="1"/>
<dbReference type="EMBL" id="AE000657">
    <property type="protein sequence ID" value="AAC07444.1"/>
    <property type="molecule type" value="Genomic_DNA"/>
</dbReference>
<dbReference type="PIR" id="F70431">
    <property type="entry name" value="F70431"/>
</dbReference>
<dbReference type="RefSeq" id="NP_214045.1">
    <property type="nucleotide sequence ID" value="NC_000918.1"/>
</dbReference>
<dbReference type="RefSeq" id="WP_010880983.1">
    <property type="nucleotide sequence ID" value="NC_000918.1"/>
</dbReference>
<dbReference type="SMR" id="O67480"/>
<dbReference type="FunCoup" id="O67480">
    <property type="interactions" value="362"/>
</dbReference>
<dbReference type="STRING" id="224324.aq_1512"/>
<dbReference type="EnsemblBacteria" id="AAC07444">
    <property type="protein sequence ID" value="AAC07444"/>
    <property type="gene ID" value="aq_1512"/>
</dbReference>
<dbReference type="KEGG" id="aae:aq_1512"/>
<dbReference type="PATRIC" id="fig|224324.8.peg.1180"/>
<dbReference type="eggNOG" id="COG0538">
    <property type="taxonomic scope" value="Bacteria"/>
</dbReference>
<dbReference type="HOGENOM" id="CLU_031953_7_1_0"/>
<dbReference type="InParanoid" id="O67480"/>
<dbReference type="OrthoDB" id="9806254at2"/>
<dbReference type="Proteomes" id="UP000000798">
    <property type="component" value="Chromosome"/>
</dbReference>
<dbReference type="GO" id="GO:0004450">
    <property type="term" value="F:isocitrate dehydrogenase (NADP+) activity"/>
    <property type="evidence" value="ECO:0007669"/>
    <property type="project" value="UniProtKB-EC"/>
</dbReference>
<dbReference type="GO" id="GO:0000287">
    <property type="term" value="F:magnesium ion binding"/>
    <property type="evidence" value="ECO:0007669"/>
    <property type="project" value="InterPro"/>
</dbReference>
<dbReference type="GO" id="GO:0051287">
    <property type="term" value="F:NAD binding"/>
    <property type="evidence" value="ECO:0007669"/>
    <property type="project" value="InterPro"/>
</dbReference>
<dbReference type="GO" id="GO:0006097">
    <property type="term" value="P:glyoxylate cycle"/>
    <property type="evidence" value="ECO:0007669"/>
    <property type="project" value="UniProtKB-KW"/>
</dbReference>
<dbReference type="GO" id="GO:0006099">
    <property type="term" value="P:tricarboxylic acid cycle"/>
    <property type="evidence" value="ECO:0007669"/>
    <property type="project" value="UniProtKB-KW"/>
</dbReference>
<dbReference type="Gene3D" id="3.40.718.10">
    <property type="entry name" value="Isopropylmalate Dehydrogenase"/>
    <property type="match status" value="1"/>
</dbReference>
<dbReference type="InterPro" id="IPR019818">
    <property type="entry name" value="IsoCit/isopropylmalate_DH_CS"/>
</dbReference>
<dbReference type="InterPro" id="IPR004439">
    <property type="entry name" value="Isocitrate_DH_NADP_dimer_prok"/>
</dbReference>
<dbReference type="InterPro" id="IPR024084">
    <property type="entry name" value="IsoPropMal-DH-like_dom"/>
</dbReference>
<dbReference type="PANTHER" id="PTHR43504">
    <property type="entry name" value="ISOCITRATE DEHYDROGENASE [NADP]"/>
    <property type="match status" value="1"/>
</dbReference>
<dbReference type="PANTHER" id="PTHR43504:SF1">
    <property type="entry name" value="ISOCITRATE DEHYDROGENASE [NADP]"/>
    <property type="match status" value="1"/>
</dbReference>
<dbReference type="Pfam" id="PF00180">
    <property type="entry name" value="Iso_dh"/>
    <property type="match status" value="1"/>
</dbReference>
<dbReference type="SMART" id="SM01329">
    <property type="entry name" value="Iso_dh"/>
    <property type="match status" value="1"/>
</dbReference>
<dbReference type="SUPFAM" id="SSF53659">
    <property type="entry name" value="Isocitrate/Isopropylmalate dehydrogenase-like"/>
    <property type="match status" value="1"/>
</dbReference>
<dbReference type="PROSITE" id="PS00470">
    <property type="entry name" value="IDH_IMDH"/>
    <property type="match status" value="1"/>
</dbReference>
<evidence type="ECO:0000250" key="1">
    <source>
        <dbReference type="UniProtKB" id="P08200"/>
    </source>
</evidence>
<evidence type="ECO:0000305" key="2"/>
<proteinExistence type="inferred from homology"/>
<feature type="chain" id="PRO_0000083548" description="Isocitrate dehydrogenase [NADP]">
    <location>
        <begin position="1"/>
        <end position="426"/>
    </location>
</feature>
<feature type="binding site" evidence="1">
    <location>
        <position position="123"/>
    </location>
    <ligand>
        <name>D-threo-isocitrate</name>
        <dbReference type="ChEBI" id="CHEBI:15562"/>
    </ligand>
</feature>
<feature type="binding site" evidence="1">
    <location>
        <position position="125"/>
    </location>
    <ligand>
        <name>D-threo-isocitrate</name>
        <dbReference type="ChEBI" id="CHEBI:15562"/>
    </ligand>
</feature>
<feature type="binding site" evidence="1">
    <location>
        <position position="129"/>
    </location>
    <ligand>
        <name>D-threo-isocitrate</name>
        <dbReference type="ChEBI" id="CHEBI:15562"/>
    </ligand>
</feature>
<feature type="binding site" evidence="1">
    <location>
        <position position="139"/>
    </location>
    <ligand>
        <name>D-threo-isocitrate</name>
        <dbReference type="ChEBI" id="CHEBI:15562"/>
    </ligand>
</feature>
<feature type="binding site" evidence="1">
    <location>
        <position position="162"/>
    </location>
    <ligand>
        <name>D-threo-isocitrate</name>
        <dbReference type="ChEBI" id="CHEBI:15562"/>
    </ligand>
</feature>
<feature type="binding site" evidence="1">
    <location>
        <position position="312"/>
    </location>
    <ligand>
        <name>Mg(2+)</name>
        <dbReference type="ChEBI" id="CHEBI:18420"/>
    </ligand>
</feature>
<feature type="binding site" evidence="1">
    <location>
        <begin position="344"/>
        <end position="350"/>
    </location>
    <ligand>
        <name>NADP(+)</name>
        <dbReference type="ChEBI" id="CHEBI:58349"/>
    </ligand>
</feature>
<feature type="binding site" evidence="1">
    <location>
        <position position="357"/>
    </location>
    <ligand>
        <name>NADP(+)</name>
        <dbReference type="ChEBI" id="CHEBI:58349"/>
    </ligand>
</feature>
<feature type="binding site" evidence="1">
    <location>
        <position position="404"/>
    </location>
    <ligand>
        <name>NADP(+)</name>
        <dbReference type="ChEBI" id="CHEBI:58349"/>
    </ligand>
</feature>
<feature type="site" description="Critical for catalysis" evidence="1">
    <location>
        <position position="169"/>
    </location>
</feature>
<feature type="site" description="Critical for catalysis" evidence="1">
    <location>
        <position position="239"/>
    </location>
</feature>
<accession>O67480</accession>
<reference key="1">
    <citation type="journal article" date="1998" name="Nature">
        <title>The complete genome of the hyperthermophilic bacterium Aquifex aeolicus.</title>
        <authorList>
            <person name="Deckert G."/>
            <person name="Warren P.V."/>
            <person name="Gaasterland T."/>
            <person name="Young W.G."/>
            <person name="Lenox A.L."/>
            <person name="Graham D.E."/>
            <person name="Overbeek R."/>
            <person name="Snead M.A."/>
            <person name="Keller M."/>
            <person name="Aujay M."/>
            <person name="Huber R."/>
            <person name="Feldman R.A."/>
            <person name="Short J.M."/>
            <person name="Olsen G.J."/>
            <person name="Swanson R.V."/>
        </authorList>
    </citation>
    <scope>NUCLEOTIDE SEQUENCE [LARGE SCALE GENOMIC DNA]</scope>
    <source>
        <strain>VF5</strain>
    </source>
</reference>
<organism>
    <name type="scientific">Aquifex aeolicus (strain VF5)</name>
    <dbReference type="NCBI Taxonomy" id="224324"/>
    <lineage>
        <taxon>Bacteria</taxon>
        <taxon>Pseudomonadati</taxon>
        <taxon>Aquificota</taxon>
        <taxon>Aquificia</taxon>
        <taxon>Aquificales</taxon>
        <taxon>Aquificaceae</taxon>
        <taxon>Aquifex</taxon>
    </lineage>
</organism>
<gene>
    <name type="primary">icd</name>
    <name type="ordered locus">aq_1512</name>
</gene>
<sequence>MNKTTFENVYYWEGKAQIPQEGQFIKLKEDKTLEVPDNPIIPFIEGDGIGPEITQAMLLIINTAVEKTYNGSKKIYWVELLAGDKAEEKTGERLPQETLDVLKESIVGIKGPLGTPVGKGVRSINSALRRAFDYYSAVRPVYWMGQATPIPNPERVDLVVFRENTDDVYAGVEFFAGTPEAKKVREFLIKEMGAKEEGFPEDVGITVKPMSEFKTKRHVRKALRYALENNKKNVAVIGKGNIMKATEGAFINWAFEVAEEPEFKGKVVTDPEAEPGEGQVKLTKVITDQMLMQLVLKPEAWDVIIAQNLNGDYVSDLAASLIGGPGFVPSGNIGDGYALFESTHGTAWDIAGKGIANPLSLTLSGAMMLEYIGWKEAAQKVYDAVRRTLAEHIGTPDIASGFQKQGIEAKAVGTMEFAEEISKRIE</sequence>
<name>IDH_AQUAE</name>